<sequence length="535" mass="59335">MTKYIFVTGGVVSSLGKGIVAASLGRLLKNRGLNVTIQKFDPYINVDPGTMNPYQHGEVFVTDDGTETDLDLGHYERFIDNNLNKYSNVTTGKIYSEVLEKERHGDYLGATVQVIPHITGMIKEKIMRAGKTLGADFVITEIGGTVGDIESQPFLEAIRQMKAEVGDENVVYIHTTLVPYLHAAHEMKTKPTQHSVRELRSIGIQPNILVVRTEAPITDDMRKKIALFCDVDPSAVVESMDVPTIYSIPLRLQDQGLDQIVLDHFGVQAPKADMTAWAQMVDHMQHLSRTIKIALVGKYVALHDAYISVAEALQHAGYPVDANIDLQMIDAEKITDDNVQDVLGSADGIIVPGGFGDRGIEGMITAIKYAREQDVPFLGICLGMQVASIEFARDVLGYADANSTEMNPDTSHKIIDLMADQADVHEMGGTQRLGLYPCKLKAGSRAAAAYDNQEMIQERHRHRYEFNNQYRDEMTAKGLVFSGTSPDDHLVEVIELPEKKFFVAAQYHPEFLSRPNRPEGLFRDFVAAASREVKD</sequence>
<feature type="chain" id="PRO_1000139477" description="CTP synthase">
    <location>
        <begin position="1"/>
        <end position="535"/>
    </location>
</feature>
<feature type="domain" description="Glutamine amidotransferase type-1" evidence="1">
    <location>
        <begin position="292"/>
        <end position="535"/>
    </location>
</feature>
<feature type="region of interest" description="Amidoligase domain" evidence="1">
    <location>
        <begin position="1"/>
        <end position="267"/>
    </location>
</feature>
<feature type="active site" description="Nucleophile; for glutamine hydrolysis" evidence="1">
    <location>
        <position position="381"/>
    </location>
</feature>
<feature type="active site" evidence="1">
    <location>
        <position position="508"/>
    </location>
</feature>
<feature type="active site" evidence="1">
    <location>
        <position position="510"/>
    </location>
</feature>
<feature type="binding site" evidence="1">
    <location>
        <position position="13"/>
    </location>
    <ligand>
        <name>CTP</name>
        <dbReference type="ChEBI" id="CHEBI:37563"/>
        <note>allosteric inhibitor</note>
    </ligand>
</feature>
<feature type="binding site" evidence="1">
    <location>
        <position position="13"/>
    </location>
    <ligand>
        <name>UTP</name>
        <dbReference type="ChEBI" id="CHEBI:46398"/>
    </ligand>
</feature>
<feature type="binding site" evidence="1">
    <location>
        <begin position="14"/>
        <end position="19"/>
    </location>
    <ligand>
        <name>ATP</name>
        <dbReference type="ChEBI" id="CHEBI:30616"/>
    </ligand>
</feature>
<feature type="binding site" evidence="1">
    <location>
        <position position="54"/>
    </location>
    <ligand>
        <name>L-glutamine</name>
        <dbReference type="ChEBI" id="CHEBI:58359"/>
    </ligand>
</feature>
<feature type="binding site" evidence="1">
    <location>
        <position position="71"/>
    </location>
    <ligand>
        <name>ATP</name>
        <dbReference type="ChEBI" id="CHEBI:30616"/>
    </ligand>
</feature>
<feature type="binding site" evidence="1">
    <location>
        <position position="71"/>
    </location>
    <ligand>
        <name>Mg(2+)</name>
        <dbReference type="ChEBI" id="CHEBI:18420"/>
    </ligand>
</feature>
<feature type="binding site" evidence="1">
    <location>
        <position position="141"/>
    </location>
    <ligand>
        <name>Mg(2+)</name>
        <dbReference type="ChEBI" id="CHEBI:18420"/>
    </ligand>
</feature>
<feature type="binding site" evidence="1">
    <location>
        <begin position="148"/>
        <end position="150"/>
    </location>
    <ligand>
        <name>CTP</name>
        <dbReference type="ChEBI" id="CHEBI:37563"/>
        <note>allosteric inhibitor</note>
    </ligand>
</feature>
<feature type="binding site" evidence="1">
    <location>
        <begin position="188"/>
        <end position="193"/>
    </location>
    <ligand>
        <name>CTP</name>
        <dbReference type="ChEBI" id="CHEBI:37563"/>
        <note>allosteric inhibitor</note>
    </ligand>
</feature>
<feature type="binding site" evidence="1">
    <location>
        <begin position="188"/>
        <end position="193"/>
    </location>
    <ligand>
        <name>UTP</name>
        <dbReference type="ChEBI" id="CHEBI:46398"/>
    </ligand>
</feature>
<feature type="binding site" evidence="1">
    <location>
        <position position="224"/>
    </location>
    <ligand>
        <name>CTP</name>
        <dbReference type="ChEBI" id="CHEBI:37563"/>
        <note>allosteric inhibitor</note>
    </ligand>
</feature>
<feature type="binding site" evidence="1">
    <location>
        <position position="224"/>
    </location>
    <ligand>
        <name>UTP</name>
        <dbReference type="ChEBI" id="CHEBI:46398"/>
    </ligand>
</feature>
<feature type="binding site" evidence="1">
    <location>
        <position position="354"/>
    </location>
    <ligand>
        <name>L-glutamine</name>
        <dbReference type="ChEBI" id="CHEBI:58359"/>
    </ligand>
</feature>
<feature type="binding site" evidence="1">
    <location>
        <begin position="382"/>
        <end position="385"/>
    </location>
    <ligand>
        <name>L-glutamine</name>
        <dbReference type="ChEBI" id="CHEBI:58359"/>
    </ligand>
</feature>
<feature type="binding site" evidence="1">
    <location>
        <position position="405"/>
    </location>
    <ligand>
        <name>L-glutamine</name>
        <dbReference type="ChEBI" id="CHEBI:58359"/>
    </ligand>
</feature>
<feature type="binding site" evidence="1">
    <location>
        <position position="463"/>
    </location>
    <ligand>
        <name>L-glutamine</name>
        <dbReference type="ChEBI" id="CHEBI:58359"/>
    </ligand>
</feature>
<protein>
    <recommendedName>
        <fullName evidence="1">CTP synthase</fullName>
        <ecNumber evidence="1">6.3.4.2</ecNumber>
    </recommendedName>
    <alternativeName>
        <fullName evidence="1">Cytidine 5'-triphosphate synthase</fullName>
    </alternativeName>
    <alternativeName>
        <fullName evidence="1">Cytidine triphosphate synthetase</fullName>
        <shortName evidence="1">CTP synthetase</shortName>
        <shortName evidence="1">CTPS</shortName>
    </alternativeName>
    <alternativeName>
        <fullName evidence="1">UTP--ammonia ligase</fullName>
    </alternativeName>
</protein>
<comment type="function">
    <text evidence="1">Catalyzes the ATP-dependent amination of UTP to CTP with either L-glutamine or ammonia as the source of nitrogen. Regulates intracellular CTP levels through interactions with the four ribonucleotide triphosphates.</text>
</comment>
<comment type="catalytic activity">
    <reaction evidence="1">
        <text>UTP + L-glutamine + ATP + H2O = CTP + L-glutamate + ADP + phosphate + 2 H(+)</text>
        <dbReference type="Rhea" id="RHEA:26426"/>
        <dbReference type="ChEBI" id="CHEBI:15377"/>
        <dbReference type="ChEBI" id="CHEBI:15378"/>
        <dbReference type="ChEBI" id="CHEBI:29985"/>
        <dbReference type="ChEBI" id="CHEBI:30616"/>
        <dbReference type="ChEBI" id="CHEBI:37563"/>
        <dbReference type="ChEBI" id="CHEBI:43474"/>
        <dbReference type="ChEBI" id="CHEBI:46398"/>
        <dbReference type="ChEBI" id="CHEBI:58359"/>
        <dbReference type="ChEBI" id="CHEBI:456216"/>
        <dbReference type="EC" id="6.3.4.2"/>
    </reaction>
</comment>
<comment type="catalytic activity">
    <reaction evidence="1">
        <text>L-glutamine + H2O = L-glutamate + NH4(+)</text>
        <dbReference type="Rhea" id="RHEA:15889"/>
        <dbReference type="ChEBI" id="CHEBI:15377"/>
        <dbReference type="ChEBI" id="CHEBI:28938"/>
        <dbReference type="ChEBI" id="CHEBI:29985"/>
        <dbReference type="ChEBI" id="CHEBI:58359"/>
    </reaction>
</comment>
<comment type="catalytic activity">
    <reaction evidence="1">
        <text>UTP + NH4(+) + ATP = CTP + ADP + phosphate + 2 H(+)</text>
        <dbReference type="Rhea" id="RHEA:16597"/>
        <dbReference type="ChEBI" id="CHEBI:15378"/>
        <dbReference type="ChEBI" id="CHEBI:28938"/>
        <dbReference type="ChEBI" id="CHEBI:30616"/>
        <dbReference type="ChEBI" id="CHEBI:37563"/>
        <dbReference type="ChEBI" id="CHEBI:43474"/>
        <dbReference type="ChEBI" id="CHEBI:46398"/>
        <dbReference type="ChEBI" id="CHEBI:456216"/>
    </reaction>
</comment>
<comment type="activity regulation">
    <text evidence="1">Allosterically activated by GTP, when glutamine is the substrate; GTP has no effect on the reaction when ammonia is the substrate. The allosteric effector GTP functions by stabilizing the protein conformation that binds the tetrahedral intermediate(s) formed during glutamine hydrolysis. Inhibited by the product CTP, via allosteric rather than competitive inhibition.</text>
</comment>
<comment type="pathway">
    <text evidence="1">Pyrimidine metabolism; CTP biosynthesis via de novo pathway; CTP from UDP: step 2/2.</text>
</comment>
<comment type="subunit">
    <text evidence="1">Homotetramer.</text>
</comment>
<comment type="miscellaneous">
    <text evidence="1">CTPSs have evolved a hybrid strategy for distinguishing between UTP and CTP. The overlapping regions of the product feedback inhibitory and substrate sites recognize a common feature in both compounds, the triphosphate moiety. To differentiate isosteric substrate and product pyrimidine rings, an additional pocket far from the expected kinase/ligase catalytic site, specifically recognizes the cytosine and ribose portions of the product inhibitor.</text>
</comment>
<comment type="similarity">
    <text evidence="1">Belongs to the CTP synthase family.</text>
</comment>
<proteinExistence type="inferred from homology"/>
<organism>
    <name type="scientific">Levilactobacillus brevis (strain ATCC 367 / BCRC 12310 / CIP 105137 / JCM 1170 / LMG 11437 / NCIMB 947 / NCTC 947)</name>
    <name type="common">Lactobacillus brevis</name>
    <dbReference type="NCBI Taxonomy" id="387344"/>
    <lineage>
        <taxon>Bacteria</taxon>
        <taxon>Bacillati</taxon>
        <taxon>Bacillota</taxon>
        <taxon>Bacilli</taxon>
        <taxon>Lactobacillales</taxon>
        <taxon>Lactobacillaceae</taxon>
        <taxon>Levilactobacillus</taxon>
    </lineage>
</organism>
<reference key="1">
    <citation type="journal article" date="2006" name="Proc. Natl. Acad. Sci. U.S.A.">
        <title>Comparative genomics of the lactic acid bacteria.</title>
        <authorList>
            <person name="Makarova K.S."/>
            <person name="Slesarev A."/>
            <person name="Wolf Y.I."/>
            <person name="Sorokin A."/>
            <person name="Mirkin B."/>
            <person name="Koonin E.V."/>
            <person name="Pavlov A."/>
            <person name="Pavlova N."/>
            <person name="Karamychev V."/>
            <person name="Polouchine N."/>
            <person name="Shakhova V."/>
            <person name="Grigoriev I."/>
            <person name="Lou Y."/>
            <person name="Rohksar D."/>
            <person name="Lucas S."/>
            <person name="Huang K."/>
            <person name="Goodstein D.M."/>
            <person name="Hawkins T."/>
            <person name="Plengvidhya V."/>
            <person name="Welker D."/>
            <person name="Hughes J."/>
            <person name="Goh Y."/>
            <person name="Benson A."/>
            <person name="Baldwin K."/>
            <person name="Lee J.-H."/>
            <person name="Diaz-Muniz I."/>
            <person name="Dosti B."/>
            <person name="Smeianov V."/>
            <person name="Wechter W."/>
            <person name="Barabote R."/>
            <person name="Lorca G."/>
            <person name="Altermann E."/>
            <person name="Barrangou R."/>
            <person name="Ganesan B."/>
            <person name="Xie Y."/>
            <person name="Rawsthorne H."/>
            <person name="Tamir D."/>
            <person name="Parker C."/>
            <person name="Breidt F."/>
            <person name="Broadbent J.R."/>
            <person name="Hutkins R."/>
            <person name="O'Sullivan D."/>
            <person name="Steele J."/>
            <person name="Unlu G."/>
            <person name="Saier M.H. Jr."/>
            <person name="Klaenhammer T."/>
            <person name="Richardson P."/>
            <person name="Kozyavkin S."/>
            <person name="Weimer B.C."/>
            <person name="Mills D.A."/>
        </authorList>
    </citation>
    <scope>NUCLEOTIDE SEQUENCE [LARGE SCALE GENOMIC DNA]</scope>
    <source>
        <strain>ATCC 367 / BCRC 12310 / CIP 105137 / JCM 1170 / LMG 11437 / NCIMB 947 / NCTC 947</strain>
    </source>
</reference>
<keyword id="KW-0067">ATP-binding</keyword>
<keyword id="KW-0315">Glutamine amidotransferase</keyword>
<keyword id="KW-0436">Ligase</keyword>
<keyword id="KW-0460">Magnesium</keyword>
<keyword id="KW-0479">Metal-binding</keyword>
<keyword id="KW-0547">Nucleotide-binding</keyword>
<keyword id="KW-0665">Pyrimidine biosynthesis</keyword>
<keyword id="KW-1185">Reference proteome</keyword>
<accession>Q03T27</accession>
<name>PYRG_LEVBA</name>
<evidence type="ECO:0000255" key="1">
    <source>
        <dbReference type="HAMAP-Rule" id="MF_01227"/>
    </source>
</evidence>
<gene>
    <name evidence="1" type="primary">pyrG</name>
    <name type="ordered locus">LVIS_0487</name>
</gene>
<dbReference type="EC" id="6.3.4.2" evidence="1"/>
<dbReference type="EMBL" id="CP000416">
    <property type="protein sequence ID" value="ABJ63645.1"/>
    <property type="molecule type" value="Genomic_DNA"/>
</dbReference>
<dbReference type="RefSeq" id="WP_011667271.1">
    <property type="nucleotide sequence ID" value="NC_008497.1"/>
</dbReference>
<dbReference type="SMR" id="Q03T27"/>
<dbReference type="STRING" id="387344.LVIS_0487"/>
<dbReference type="MEROPS" id="C26.964"/>
<dbReference type="KEGG" id="lbr:LVIS_0487"/>
<dbReference type="eggNOG" id="COG0504">
    <property type="taxonomic scope" value="Bacteria"/>
</dbReference>
<dbReference type="HOGENOM" id="CLU_011675_5_0_9"/>
<dbReference type="UniPathway" id="UPA00159">
    <property type="reaction ID" value="UER00277"/>
</dbReference>
<dbReference type="Proteomes" id="UP000001652">
    <property type="component" value="Chromosome"/>
</dbReference>
<dbReference type="GO" id="GO:0005829">
    <property type="term" value="C:cytosol"/>
    <property type="evidence" value="ECO:0007669"/>
    <property type="project" value="TreeGrafter"/>
</dbReference>
<dbReference type="GO" id="GO:0005524">
    <property type="term" value="F:ATP binding"/>
    <property type="evidence" value="ECO:0007669"/>
    <property type="project" value="UniProtKB-KW"/>
</dbReference>
<dbReference type="GO" id="GO:0003883">
    <property type="term" value="F:CTP synthase activity"/>
    <property type="evidence" value="ECO:0007669"/>
    <property type="project" value="UniProtKB-UniRule"/>
</dbReference>
<dbReference type="GO" id="GO:0004359">
    <property type="term" value="F:glutaminase activity"/>
    <property type="evidence" value="ECO:0007669"/>
    <property type="project" value="RHEA"/>
</dbReference>
<dbReference type="GO" id="GO:0042802">
    <property type="term" value="F:identical protein binding"/>
    <property type="evidence" value="ECO:0007669"/>
    <property type="project" value="TreeGrafter"/>
</dbReference>
<dbReference type="GO" id="GO:0046872">
    <property type="term" value="F:metal ion binding"/>
    <property type="evidence" value="ECO:0007669"/>
    <property type="project" value="UniProtKB-KW"/>
</dbReference>
<dbReference type="GO" id="GO:0044210">
    <property type="term" value="P:'de novo' CTP biosynthetic process"/>
    <property type="evidence" value="ECO:0007669"/>
    <property type="project" value="UniProtKB-UniRule"/>
</dbReference>
<dbReference type="GO" id="GO:0019856">
    <property type="term" value="P:pyrimidine nucleobase biosynthetic process"/>
    <property type="evidence" value="ECO:0007669"/>
    <property type="project" value="TreeGrafter"/>
</dbReference>
<dbReference type="CDD" id="cd03113">
    <property type="entry name" value="CTPS_N"/>
    <property type="match status" value="1"/>
</dbReference>
<dbReference type="CDD" id="cd01746">
    <property type="entry name" value="GATase1_CTP_Synthase"/>
    <property type="match status" value="1"/>
</dbReference>
<dbReference type="FunFam" id="3.40.50.300:FF:000009">
    <property type="entry name" value="CTP synthase"/>
    <property type="match status" value="1"/>
</dbReference>
<dbReference type="FunFam" id="3.40.50.880:FF:000002">
    <property type="entry name" value="CTP synthase"/>
    <property type="match status" value="1"/>
</dbReference>
<dbReference type="Gene3D" id="3.40.50.880">
    <property type="match status" value="1"/>
</dbReference>
<dbReference type="Gene3D" id="3.40.50.300">
    <property type="entry name" value="P-loop containing nucleotide triphosphate hydrolases"/>
    <property type="match status" value="1"/>
</dbReference>
<dbReference type="HAMAP" id="MF_01227">
    <property type="entry name" value="PyrG"/>
    <property type="match status" value="1"/>
</dbReference>
<dbReference type="InterPro" id="IPR029062">
    <property type="entry name" value="Class_I_gatase-like"/>
</dbReference>
<dbReference type="InterPro" id="IPR004468">
    <property type="entry name" value="CTP_synthase"/>
</dbReference>
<dbReference type="InterPro" id="IPR017456">
    <property type="entry name" value="CTP_synthase_N"/>
</dbReference>
<dbReference type="InterPro" id="IPR017926">
    <property type="entry name" value="GATASE"/>
</dbReference>
<dbReference type="InterPro" id="IPR033828">
    <property type="entry name" value="GATase1_CTP_Synthase"/>
</dbReference>
<dbReference type="InterPro" id="IPR027417">
    <property type="entry name" value="P-loop_NTPase"/>
</dbReference>
<dbReference type="NCBIfam" id="NF003792">
    <property type="entry name" value="PRK05380.1"/>
    <property type="match status" value="1"/>
</dbReference>
<dbReference type="NCBIfam" id="TIGR00337">
    <property type="entry name" value="PyrG"/>
    <property type="match status" value="1"/>
</dbReference>
<dbReference type="PANTHER" id="PTHR11550">
    <property type="entry name" value="CTP SYNTHASE"/>
    <property type="match status" value="1"/>
</dbReference>
<dbReference type="PANTHER" id="PTHR11550:SF0">
    <property type="entry name" value="CTP SYNTHASE-RELATED"/>
    <property type="match status" value="1"/>
</dbReference>
<dbReference type="Pfam" id="PF06418">
    <property type="entry name" value="CTP_synth_N"/>
    <property type="match status" value="1"/>
</dbReference>
<dbReference type="Pfam" id="PF00117">
    <property type="entry name" value="GATase"/>
    <property type="match status" value="1"/>
</dbReference>
<dbReference type="SUPFAM" id="SSF52317">
    <property type="entry name" value="Class I glutamine amidotransferase-like"/>
    <property type="match status" value="1"/>
</dbReference>
<dbReference type="SUPFAM" id="SSF52540">
    <property type="entry name" value="P-loop containing nucleoside triphosphate hydrolases"/>
    <property type="match status" value="1"/>
</dbReference>
<dbReference type="PROSITE" id="PS51273">
    <property type="entry name" value="GATASE_TYPE_1"/>
    <property type="match status" value="1"/>
</dbReference>